<feature type="chain" id="PRO_0000181048" description="Large ribosomal subunit protein bL27">
    <location>
        <begin position="1"/>
        <end position="86"/>
    </location>
</feature>
<feature type="region of interest" description="Disordered" evidence="2">
    <location>
        <begin position="1"/>
        <end position="26"/>
    </location>
</feature>
<keyword id="KW-1185">Reference proteome</keyword>
<keyword id="KW-0687">Ribonucleoprotein</keyword>
<keyword id="KW-0689">Ribosomal protein</keyword>
<proteinExistence type="inferred from homology"/>
<sequence>MASKKAGGSTKNGRDSQSKRLGVKRFGGEKVLPGTIIVRQRGTKFHLGNNVKMGRDYTIYSVVEGLVKFERFSKERFKVSVYPKAV</sequence>
<accession>Q6MGS4</accession>
<protein>
    <recommendedName>
        <fullName evidence="1">Large ribosomal subunit protein bL27</fullName>
    </recommendedName>
    <alternativeName>
        <fullName evidence="3">50S ribosomal protein L27</fullName>
    </alternativeName>
</protein>
<reference key="1">
    <citation type="journal article" date="2004" name="Science">
        <title>A predator unmasked: life cycle of Bdellovibrio bacteriovorus from a genomic perspective.</title>
        <authorList>
            <person name="Rendulic S."/>
            <person name="Jagtap P."/>
            <person name="Rosinus A."/>
            <person name="Eppinger M."/>
            <person name="Baar C."/>
            <person name="Lanz C."/>
            <person name="Keller H."/>
            <person name="Lambert C."/>
            <person name="Evans K.J."/>
            <person name="Goesmann A."/>
            <person name="Meyer F."/>
            <person name="Sockett R.E."/>
            <person name="Schuster S.C."/>
        </authorList>
    </citation>
    <scope>NUCLEOTIDE SEQUENCE [LARGE SCALE GENOMIC DNA]</scope>
    <source>
        <strain>ATCC 15356 / DSM 50701 / NCIMB 9529 / HD100</strain>
    </source>
</reference>
<comment type="similarity">
    <text evidence="1">Belongs to the bacterial ribosomal protein bL27 family.</text>
</comment>
<dbReference type="EMBL" id="BX842656">
    <property type="protein sequence ID" value="CAE81205.1"/>
    <property type="molecule type" value="Genomic_DNA"/>
</dbReference>
<dbReference type="RefSeq" id="WP_011166148.1">
    <property type="nucleotide sequence ID" value="NC_005363.1"/>
</dbReference>
<dbReference type="SMR" id="Q6MGS4"/>
<dbReference type="STRING" id="264462.Bd3848"/>
<dbReference type="GeneID" id="93014617"/>
<dbReference type="KEGG" id="bba:Bd3848"/>
<dbReference type="eggNOG" id="COG0211">
    <property type="taxonomic scope" value="Bacteria"/>
</dbReference>
<dbReference type="HOGENOM" id="CLU_095424_4_1_7"/>
<dbReference type="Proteomes" id="UP000008080">
    <property type="component" value="Chromosome"/>
</dbReference>
<dbReference type="GO" id="GO:1990904">
    <property type="term" value="C:ribonucleoprotein complex"/>
    <property type="evidence" value="ECO:0007669"/>
    <property type="project" value="UniProtKB-KW"/>
</dbReference>
<dbReference type="GO" id="GO:0005840">
    <property type="term" value="C:ribosome"/>
    <property type="evidence" value="ECO:0007669"/>
    <property type="project" value="UniProtKB-KW"/>
</dbReference>
<dbReference type="GO" id="GO:0003735">
    <property type="term" value="F:structural constituent of ribosome"/>
    <property type="evidence" value="ECO:0007669"/>
    <property type="project" value="InterPro"/>
</dbReference>
<dbReference type="GO" id="GO:0006412">
    <property type="term" value="P:translation"/>
    <property type="evidence" value="ECO:0007669"/>
    <property type="project" value="UniProtKB-UniRule"/>
</dbReference>
<dbReference type="FunFam" id="2.40.50.100:FF:000004">
    <property type="entry name" value="50S ribosomal protein L27"/>
    <property type="match status" value="1"/>
</dbReference>
<dbReference type="Gene3D" id="2.40.50.100">
    <property type="match status" value="1"/>
</dbReference>
<dbReference type="HAMAP" id="MF_00539">
    <property type="entry name" value="Ribosomal_bL27"/>
    <property type="match status" value="1"/>
</dbReference>
<dbReference type="InterPro" id="IPR001684">
    <property type="entry name" value="Ribosomal_bL27"/>
</dbReference>
<dbReference type="InterPro" id="IPR018261">
    <property type="entry name" value="Ribosomal_bL27_CS"/>
</dbReference>
<dbReference type="NCBIfam" id="TIGR00062">
    <property type="entry name" value="L27"/>
    <property type="match status" value="1"/>
</dbReference>
<dbReference type="PANTHER" id="PTHR15893:SF0">
    <property type="entry name" value="LARGE RIBOSOMAL SUBUNIT PROTEIN BL27M"/>
    <property type="match status" value="1"/>
</dbReference>
<dbReference type="PANTHER" id="PTHR15893">
    <property type="entry name" value="RIBOSOMAL PROTEIN L27"/>
    <property type="match status" value="1"/>
</dbReference>
<dbReference type="Pfam" id="PF01016">
    <property type="entry name" value="Ribosomal_L27"/>
    <property type="match status" value="1"/>
</dbReference>
<dbReference type="PRINTS" id="PR00063">
    <property type="entry name" value="RIBOSOMALL27"/>
</dbReference>
<dbReference type="SUPFAM" id="SSF110324">
    <property type="entry name" value="Ribosomal L27 protein-like"/>
    <property type="match status" value="1"/>
</dbReference>
<dbReference type="PROSITE" id="PS00831">
    <property type="entry name" value="RIBOSOMAL_L27"/>
    <property type="match status" value="1"/>
</dbReference>
<gene>
    <name evidence="1" type="primary">rpmA</name>
    <name type="ordered locus">Bd3848</name>
</gene>
<evidence type="ECO:0000255" key="1">
    <source>
        <dbReference type="HAMAP-Rule" id="MF_00539"/>
    </source>
</evidence>
<evidence type="ECO:0000256" key="2">
    <source>
        <dbReference type="SAM" id="MobiDB-lite"/>
    </source>
</evidence>
<evidence type="ECO:0000305" key="3"/>
<organism>
    <name type="scientific">Bdellovibrio bacteriovorus (strain ATCC 15356 / DSM 50701 / NCIMB 9529 / HD100)</name>
    <dbReference type="NCBI Taxonomy" id="264462"/>
    <lineage>
        <taxon>Bacteria</taxon>
        <taxon>Pseudomonadati</taxon>
        <taxon>Bdellovibrionota</taxon>
        <taxon>Bdellovibrionia</taxon>
        <taxon>Bdellovibrionales</taxon>
        <taxon>Pseudobdellovibrionaceae</taxon>
        <taxon>Bdellovibrio</taxon>
    </lineage>
</organism>
<name>RL27_BDEBA</name>